<feature type="chain" id="PRO_0000112638" description="Acetylglutamate kinase">
    <location>
        <begin position="1"/>
        <end position="298"/>
    </location>
</feature>
<feature type="binding site" evidence="1">
    <location>
        <begin position="69"/>
        <end position="70"/>
    </location>
    <ligand>
        <name>substrate</name>
    </ligand>
</feature>
<feature type="binding site" evidence="1">
    <location>
        <position position="91"/>
    </location>
    <ligand>
        <name>substrate</name>
    </ligand>
</feature>
<feature type="binding site" evidence="1">
    <location>
        <position position="191"/>
    </location>
    <ligand>
        <name>substrate</name>
    </ligand>
</feature>
<feature type="site" description="Transition state stabilizer" evidence="1">
    <location>
        <position position="34"/>
    </location>
</feature>
<feature type="site" description="Transition state stabilizer" evidence="1">
    <location>
        <position position="251"/>
    </location>
</feature>
<proteinExistence type="inferred from homology"/>
<keyword id="KW-0028">Amino-acid biosynthesis</keyword>
<keyword id="KW-0055">Arginine biosynthesis</keyword>
<keyword id="KW-0067">ATP-binding</keyword>
<keyword id="KW-0963">Cytoplasm</keyword>
<keyword id="KW-0418">Kinase</keyword>
<keyword id="KW-0547">Nucleotide-binding</keyword>
<keyword id="KW-0808">Transferase</keyword>
<organism>
    <name type="scientific">Neisseria meningitidis serogroup A / serotype 4A (strain DSM 15465 / Z2491)</name>
    <dbReference type="NCBI Taxonomy" id="122587"/>
    <lineage>
        <taxon>Bacteria</taxon>
        <taxon>Pseudomonadati</taxon>
        <taxon>Pseudomonadota</taxon>
        <taxon>Betaproteobacteria</taxon>
        <taxon>Neisseriales</taxon>
        <taxon>Neisseriaceae</taxon>
        <taxon>Neisseria</taxon>
    </lineage>
</organism>
<protein>
    <recommendedName>
        <fullName evidence="1">Acetylglutamate kinase</fullName>
        <ecNumber evidence="1">2.7.2.8</ecNumber>
    </recommendedName>
    <alternativeName>
        <fullName evidence="1">N-acetyl-L-glutamate 5-phosphotransferase</fullName>
    </alternativeName>
    <alternativeName>
        <fullName evidence="1">NAG kinase</fullName>
        <shortName evidence="1">NAGK</shortName>
    </alternativeName>
</protein>
<comment type="function">
    <text evidence="1">Catalyzes the ATP-dependent phosphorylation of N-acetyl-L-glutamate.</text>
</comment>
<comment type="catalytic activity">
    <reaction evidence="1">
        <text>N-acetyl-L-glutamate + ATP = N-acetyl-L-glutamyl 5-phosphate + ADP</text>
        <dbReference type="Rhea" id="RHEA:14629"/>
        <dbReference type="ChEBI" id="CHEBI:30616"/>
        <dbReference type="ChEBI" id="CHEBI:44337"/>
        <dbReference type="ChEBI" id="CHEBI:57936"/>
        <dbReference type="ChEBI" id="CHEBI:456216"/>
        <dbReference type="EC" id="2.7.2.8"/>
    </reaction>
</comment>
<comment type="pathway">
    <text evidence="1">Amino-acid biosynthesis; L-arginine biosynthesis; N(2)-acetyl-L-ornithine from L-glutamate: step 2/4.</text>
</comment>
<comment type="subcellular location">
    <subcellularLocation>
        <location evidence="1">Cytoplasm</location>
    </subcellularLocation>
</comment>
<comment type="similarity">
    <text evidence="1">Belongs to the acetylglutamate kinase family. ArgB subfamily.</text>
</comment>
<name>ARGB_NEIMA</name>
<reference key="1">
    <citation type="journal article" date="2000" name="Nature">
        <title>Complete DNA sequence of a serogroup A strain of Neisseria meningitidis Z2491.</title>
        <authorList>
            <person name="Parkhill J."/>
            <person name="Achtman M."/>
            <person name="James K.D."/>
            <person name="Bentley S.D."/>
            <person name="Churcher C.M."/>
            <person name="Klee S.R."/>
            <person name="Morelli G."/>
            <person name="Basham D."/>
            <person name="Brown D."/>
            <person name="Chillingworth T."/>
            <person name="Davies R.M."/>
            <person name="Davis P."/>
            <person name="Devlin K."/>
            <person name="Feltwell T."/>
            <person name="Hamlin N."/>
            <person name="Holroyd S."/>
            <person name="Jagels K."/>
            <person name="Leather S."/>
            <person name="Moule S."/>
            <person name="Mungall K.L."/>
            <person name="Quail M.A."/>
            <person name="Rajandream M.A."/>
            <person name="Rutherford K.M."/>
            <person name="Simmonds M."/>
            <person name="Skelton J."/>
            <person name="Whitehead S."/>
            <person name="Spratt B.G."/>
            <person name="Barrell B.G."/>
        </authorList>
    </citation>
    <scope>NUCLEOTIDE SEQUENCE [LARGE SCALE GENOMIC DNA]</scope>
    <source>
        <strain>DSM 15465 / Z2491</strain>
    </source>
</reference>
<sequence>MESENIISAADKARILAEALPYIRRFSGSVAVIKYGGNAMTEPALKEGFARDVVLLKLVGIHPVIVHGGGPQINAMLEKVGKKGEFVQGMRVTDKEAMDIVEMVLGGHVNKEIVSMINTYGGHAVGVSGRDDHFIKAKKLLIDTPEQNGVDIGQVGTVESIDTGLVKGLIERGCIPVVAPVGVGEKGEAFNINADLVAGKLAEELNAEKLLMMTNIAGVMDKTGNLLTKLTPKRIDELIADGTLYGGMLPKIASAVEAAVNGVKATHIIDGRVPNALLLEIFTDAGIGSMILGGGEDA</sequence>
<gene>
    <name evidence="1" type="primary">argB</name>
    <name type="ordered locus">NMA1275</name>
</gene>
<evidence type="ECO:0000255" key="1">
    <source>
        <dbReference type="HAMAP-Rule" id="MF_00082"/>
    </source>
</evidence>
<accession>Q9JUK2</accession>
<accession>A1IRR7</accession>
<dbReference type="EC" id="2.7.2.8" evidence="1"/>
<dbReference type="EMBL" id="AL157959">
    <property type="protein sequence ID" value="CAM08461.1"/>
    <property type="molecule type" value="Genomic_DNA"/>
</dbReference>
<dbReference type="PIR" id="G81895">
    <property type="entry name" value="G81895"/>
</dbReference>
<dbReference type="RefSeq" id="WP_002221039.1">
    <property type="nucleotide sequence ID" value="NC_003116.1"/>
</dbReference>
<dbReference type="SMR" id="Q9JUK2"/>
<dbReference type="EnsemblBacteria" id="CAM08461">
    <property type="protein sequence ID" value="CAM08461"/>
    <property type="gene ID" value="NMA1275"/>
</dbReference>
<dbReference type="KEGG" id="nma:NMA1275"/>
<dbReference type="HOGENOM" id="CLU_053680_0_0_4"/>
<dbReference type="UniPathway" id="UPA00068">
    <property type="reaction ID" value="UER00107"/>
</dbReference>
<dbReference type="Proteomes" id="UP000000626">
    <property type="component" value="Chromosome"/>
</dbReference>
<dbReference type="GO" id="GO:0005737">
    <property type="term" value="C:cytoplasm"/>
    <property type="evidence" value="ECO:0007669"/>
    <property type="project" value="UniProtKB-SubCell"/>
</dbReference>
<dbReference type="GO" id="GO:0003991">
    <property type="term" value="F:acetylglutamate kinase activity"/>
    <property type="evidence" value="ECO:0007669"/>
    <property type="project" value="UniProtKB-UniRule"/>
</dbReference>
<dbReference type="GO" id="GO:0005524">
    <property type="term" value="F:ATP binding"/>
    <property type="evidence" value="ECO:0007669"/>
    <property type="project" value="UniProtKB-UniRule"/>
</dbReference>
<dbReference type="GO" id="GO:0042450">
    <property type="term" value="P:arginine biosynthetic process via ornithine"/>
    <property type="evidence" value="ECO:0007669"/>
    <property type="project" value="UniProtKB-UniRule"/>
</dbReference>
<dbReference type="GO" id="GO:0006526">
    <property type="term" value="P:L-arginine biosynthetic process"/>
    <property type="evidence" value="ECO:0007669"/>
    <property type="project" value="UniProtKB-UniPathway"/>
</dbReference>
<dbReference type="CDD" id="cd04250">
    <property type="entry name" value="AAK_NAGK-C"/>
    <property type="match status" value="1"/>
</dbReference>
<dbReference type="FunFam" id="3.40.1160.10:FF:000004">
    <property type="entry name" value="Acetylglutamate kinase"/>
    <property type="match status" value="1"/>
</dbReference>
<dbReference type="Gene3D" id="3.40.1160.10">
    <property type="entry name" value="Acetylglutamate kinase-like"/>
    <property type="match status" value="1"/>
</dbReference>
<dbReference type="HAMAP" id="MF_00082">
    <property type="entry name" value="ArgB"/>
    <property type="match status" value="1"/>
</dbReference>
<dbReference type="InterPro" id="IPR036393">
    <property type="entry name" value="AceGlu_kinase-like_sf"/>
</dbReference>
<dbReference type="InterPro" id="IPR004662">
    <property type="entry name" value="AcgluKinase_fam"/>
</dbReference>
<dbReference type="InterPro" id="IPR037528">
    <property type="entry name" value="ArgB"/>
</dbReference>
<dbReference type="InterPro" id="IPR001048">
    <property type="entry name" value="Asp/Glu/Uridylate_kinase"/>
</dbReference>
<dbReference type="InterPro" id="IPR001057">
    <property type="entry name" value="Glu/AcGlu_kinase"/>
</dbReference>
<dbReference type="InterPro" id="IPR041727">
    <property type="entry name" value="NAGK-C"/>
</dbReference>
<dbReference type="NCBIfam" id="TIGR00761">
    <property type="entry name" value="argB"/>
    <property type="match status" value="1"/>
</dbReference>
<dbReference type="PANTHER" id="PTHR23342">
    <property type="entry name" value="N-ACETYLGLUTAMATE SYNTHASE"/>
    <property type="match status" value="1"/>
</dbReference>
<dbReference type="PANTHER" id="PTHR23342:SF0">
    <property type="entry name" value="N-ACETYLGLUTAMATE SYNTHASE, MITOCHONDRIAL"/>
    <property type="match status" value="1"/>
</dbReference>
<dbReference type="Pfam" id="PF00696">
    <property type="entry name" value="AA_kinase"/>
    <property type="match status" value="1"/>
</dbReference>
<dbReference type="PIRSF" id="PIRSF000728">
    <property type="entry name" value="NAGK"/>
    <property type="match status" value="1"/>
</dbReference>
<dbReference type="PRINTS" id="PR00474">
    <property type="entry name" value="GLU5KINASE"/>
</dbReference>
<dbReference type="SUPFAM" id="SSF53633">
    <property type="entry name" value="Carbamate kinase-like"/>
    <property type="match status" value="1"/>
</dbReference>